<organism>
    <name type="scientific">Caulobacter sp. (strain K31)</name>
    <dbReference type="NCBI Taxonomy" id="366602"/>
    <lineage>
        <taxon>Bacteria</taxon>
        <taxon>Pseudomonadati</taxon>
        <taxon>Pseudomonadota</taxon>
        <taxon>Alphaproteobacteria</taxon>
        <taxon>Caulobacterales</taxon>
        <taxon>Caulobacteraceae</taxon>
        <taxon>Caulobacter</taxon>
    </lineage>
</organism>
<comment type="function">
    <text evidence="1">This is one of the proteins that binds to the 5S RNA in the ribosome where it forms part of the central protuberance.</text>
</comment>
<comment type="subunit">
    <text evidence="1">Part of the 50S ribosomal subunit; part of the 5S rRNA/L5/L18/L25 subcomplex. Contacts the 5S rRNA. Binds to the 5S rRNA independently of L5 and L18.</text>
</comment>
<comment type="similarity">
    <text evidence="1">Belongs to the bacterial ribosomal protein bL25 family. CTC subfamily.</text>
</comment>
<reference key="1">
    <citation type="submission" date="2008-01" db="EMBL/GenBank/DDBJ databases">
        <title>Complete sequence of chromosome of Caulobacter sp. K31.</title>
        <authorList>
            <consortium name="US DOE Joint Genome Institute"/>
            <person name="Copeland A."/>
            <person name="Lucas S."/>
            <person name="Lapidus A."/>
            <person name="Barry K."/>
            <person name="Glavina del Rio T."/>
            <person name="Dalin E."/>
            <person name="Tice H."/>
            <person name="Pitluck S."/>
            <person name="Bruce D."/>
            <person name="Goodwin L."/>
            <person name="Thompson L.S."/>
            <person name="Brettin T."/>
            <person name="Detter J.C."/>
            <person name="Han C."/>
            <person name="Schmutz J."/>
            <person name="Larimer F."/>
            <person name="Land M."/>
            <person name="Hauser L."/>
            <person name="Kyrpides N."/>
            <person name="Kim E."/>
            <person name="Stephens C."/>
            <person name="Richardson P."/>
        </authorList>
    </citation>
    <scope>NUCLEOTIDE SEQUENCE [LARGE SCALE GENOMIC DNA]</scope>
    <source>
        <strain>K31</strain>
    </source>
</reference>
<gene>
    <name evidence="1" type="primary">rplY</name>
    <name evidence="1" type="synonym">ctc</name>
    <name type="ordered locus">Caul_0667</name>
</gene>
<feature type="chain" id="PRO_1000086620" description="Large ribosomal subunit protein bL25">
    <location>
        <begin position="1"/>
        <end position="199"/>
    </location>
</feature>
<keyword id="KW-0687">Ribonucleoprotein</keyword>
<keyword id="KW-0689">Ribosomal protein</keyword>
<keyword id="KW-0694">RNA-binding</keyword>
<keyword id="KW-0699">rRNA-binding</keyword>
<dbReference type="EMBL" id="CP000927">
    <property type="protein sequence ID" value="ABZ69800.1"/>
    <property type="molecule type" value="Genomic_DNA"/>
</dbReference>
<dbReference type="SMR" id="B0T899"/>
<dbReference type="STRING" id="366602.Caul_0667"/>
<dbReference type="KEGG" id="cak:Caul_0667"/>
<dbReference type="eggNOG" id="COG1825">
    <property type="taxonomic scope" value="Bacteria"/>
</dbReference>
<dbReference type="HOGENOM" id="CLU_075939_0_0_5"/>
<dbReference type="OrthoDB" id="9806411at2"/>
<dbReference type="GO" id="GO:0022625">
    <property type="term" value="C:cytosolic large ribosomal subunit"/>
    <property type="evidence" value="ECO:0007669"/>
    <property type="project" value="TreeGrafter"/>
</dbReference>
<dbReference type="GO" id="GO:0008097">
    <property type="term" value="F:5S rRNA binding"/>
    <property type="evidence" value="ECO:0007669"/>
    <property type="project" value="InterPro"/>
</dbReference>
<dbReference type="GO" id="GO:0003735">
    <property type="term" value="F:structural constituent of ribosome"/>
    <property type="evidence" value="ECO:0007669"/>
    <property type="project" value="InterPro"/>
</dbReference>
<dbReference type="GO" id="GO:0006412">
    <property type="term" value="P:translation"/>
    <property type="evidence" value="ECO:0007669"/>
    <property type="project" value="UniProtKB-UniRule"/>
</dbReference>
<dbReference type="CDD" id="cd00495">
    <property type="entry name" value="Ribosomal_L25_TL5_CTC"/>
    <property type="match status" value="1"/>
</dbReference>
<dbReference type="Gene3D" id="2.170.120.20">
    <property type="entry name" value="Ribosomal protein L25, beta domain"/>
    <property type="match status" value="1"/>
</dbReference>
<dbReference type="Gene3D" id="2.40.240.10">
    <property type="entry name" value="Ribosomal Protein L25, Chain P"/>
    <property type="match status" value="1"/>
</dbReference>
<dbReference type="HAMAP" id="MF_01334">
    <property type="entry name" value="Ribosomal_bL25_CTC"/>
    <property type="match status" value="1"/>
</dbReference>
<dbReference type="InterPro" id="IPR020056">
    <property type="entry name" value="Rbsml_bL25/Gln-tRNA_synth_N"/>
</dbReference>
<dbReference type="InterPro" id="IPR011035">
    <property type="entry name" value="Ribosomal_bL25/Gln-tRNA_synth"/>
</dbReference>
<dbReference type="InterPro" id="IPR020057">
    <property type="entry name" value="Ribosomal_bL25_b-dom"/>
</dbReference>
<dbReference type="InterPro" id="IPR037121">
    <property type="entry name" value="Ribosomal_bL25_C"/>
</dbReference>
<dbReference type="InterPro" id="IPR001021">
    <property type="entry name" value="Ribosomal_bL25_long"/>
</dbReference>
<dbReference type="InterPro" id="IPR029751">
    <property type="entry name" value="Ribosomal_L25_dom"/>
</dbReference>
<dbReference type="InterPro" id="IPR020930">
    <property type="entry name" value="Ribosomal_uL5_bac-type"/>
</dbReference>
<dbReference type="NCBIfam" id="TIGR00731">
    <property type="entry name" value="bL25_bact_ctc"/>
    <property type="match status" value="1"/>
</dbReference>
<dbReference type="NCBIfam" id="NF004128">
    <property type="entry name" value="PRK05618.1-2"/>
    <property type="match status" value="1"/>
</dbReference>
<dbReference type="PANTHER" id="PTHR33284">
    <property type="entry name" value="RIBOSOMAL PROTEIN L25/GLN-TRNA SYNTHETASE, ANTI-CODON-BINDING DOMAIN-CONTAINING PROTEIN"/>
    <property type="match status" value="1"/>
</dbReference>
<dbReference type="PANTHER" id="PTHR33284:SF1">
    <property type="entry name" value="RIBOSOMAL PROTEIN L25_GLN-TRNA SYNTHETASE, ANTI-CODON-BINDING DOMAIN-CONTAINING PROTEIN"/>
    <property type="match status" value="1"/>
</dbReference>
<dbReference type="Pfam" id="PF01386">
    <property type="entry name" value="Ribosomal_L25p"/>
    <property type="match status" value="1"/>
</dbReference>
<dbReference type="Pfam" id="PF14693">
    <property type="entry name" value="Ribosomal_TL5_C"/>
    <property type="match status" value="1"/>
</dbReference>
<dbReference type="SUPFAM" id="SSF50715">
    <property type="entry name" value="Ribosomal protein L25-like"/>
    <property type="match status" value="1"/>
</dbReference>
<name>RL25_CAUSK</name>
<proteinExistence type="inferred from homology"/>
<sequence>MAEIILNVEIRDRAGTGGSRETRRQGKVPGVLYGGPLAPVNIAVKGNEFRKALHTGKLLGHLVTLQHGDEKQSVIAKAVQFHPVTDEPLHFDLYRVDEHQLIKIEIPVHFKNHDISVGLKKGGTLEIIRHTVELACPADKIPEELVIDLASHDIGDTIRISEIKLPEGVRPAMERDFVIANLKASAASQSTEGDTTAEA</sequence>
<protein>
    <recommendedName>
        <fullName evidence="1">Large ribosomal subunit protein bL25</fullName>
    </recommendedName>
    <alternativeName>
        <fullName evidence="2">50S ribosomal protein L25</fullName>
    </alternativeName>
    <alternativeName>
        <fullName evidence="1">General stress protein CTC</fullName>
    </alternativeName>
</protein>
<evidence type="ECO:0000255" key="1">
    <source>
        <dbReference type="HAMAP-Rule" id="MF_01334"/>
    </source>
</evidence>
<evidence type="ECO:0000305" key="2"/>
<accession>B0T899</accession>